<sequence length="342" mass="39042">MQPPPMRERQRWRPEEDAILLAYVRQYGPREWSLVSQRMNRPLHRDAKSCLERWKNYLRPGIKKGSLTDDEQRLVIRLQAKHGNKWKKIAAEVPGRTAKRLGKWWEVFKEKQQRELRDRDRRRLPPPLDGDERGCAGGRYDWLLEDFADKLVNDHHRRMMAAPILPPWMSSSPSSSSSPSVTLSLASAAVAPAPAAPPPTWGGGGGGEVVVAELMECCREMEEGQRAWAAHRKEAAWRMKRVEMQLETERACRRREATEEFEAKMRALREEQAAAVERVEAEYREKMAGLRRDAEAKEQKMAEQWAAKHARLAKFLDQVAACRRWPPVEINGGGGGGPGGGR</sequence>
<feature type="chain" id="PRO_0000299136" description="Protein rough sheath 2 homolog">
    <location>
        <begin position="1"/>
        <end position="342"/>
    </location>
</feature>
<feature type="domain" description="HTH myb-type 1" evidence="3">
    <location>
        <begin position="1"/>
        <end position="58"/>
    </location>
</feature>
<feature type="domain" description="HTH myb-type 2" evidence="3">
    <location>
        <begin position="59"/>
        <end position="113"/>
    </location>
</feature>
<feature type="DNA-binding region" description="H-T-H motif" evidence="3">
    <location>
        <begin position="32"/>
        <end position="58"/>
    </location>
</feature>
<feature type="DNA-binding region" description="H-T-H motif" evidence="3">
    <location>
        <begin position="86"/>
        <end position="109"/>
    </location>
</feature>
<feature type="coiled-coil region" evidence="2">
    <location>
        <begin position="253"/>
        <end position="304"/>
    </location>
</feature>
<comment type="function">
    <text evidence="1">Transcription factor required for normal cell differentiation. May interact with other proteins to repress the knox homeobox genes (By similarity).</text>
</comment>
<comment type="subcellular location">
    <subcellularLocation>
        <location evidence="3">Nucleus</location>
    </subcellularLocation>
</comment>
<comment type="sequence caution" evidence="4">
    <conflict type="erroneous initiation">
        <sequence resource="EMBL-CDS" id="BAB68270"/>
    </conflict>
</comment>
<reference key="1">
    <citation type="submission" date="2001-06" db="EMBL/GenBank/DDBJ databases">
        <title>Isolation and characterization of a cDNA encoding an orthologue of Rough Sheath 2 (OsRS2) from Oriza sativa.</title>
        <authorList>
            <person name="Sato Y."/>
            <person name="Nishimura A."/>
            <person name="Ashikari M."/>
            <person name="Matsuoka M."/>
        </authorList>
    </citation>
    <scope>NUCLEOTIDE SEQUENCE [GENOMIC DNA / MRNA]</scope>
</reference>
<reference key="2">
    <citation type="journal article" date="2005" name="BMC Biol.">
        <title>The sequence of rice chromosomes 11 and 12, rich in disease resistance genes and recent gene duplications.</title>
        <authorList>
            <consortium name="The rice chromosomes 11 and 12 sequencing consortia"/>
        </authorList>
    </citation>
    <scope>NUCLEOTIDE SEQUENCE [LARGE SCALE GENOMIC DNA]</scope>
    <source>
        <strain>cv. Nipponbare</strain>
    </source>
</reference>
<reference key="3">
    <citation type="journal article" date="2005" name="Nature">
        <title>The map-based sequence of the rice genome.</title>
        <authorList>
            <consortium name="International rice genome sequencing project (IRGSP)"/>
        </authorList>
    </citation>
    <scope>NUCLEOTIDE SEQUENCE [LARGE SCALE GENOMIC DNA]</scope>
    <source>
        <strain>cv. Nipponbare</strain>
    </source>
</reference>
<reference key="4">
    <citation type="journal article" date="2008" name="Nucleic Acids Res.">
        <title>The rice annotation project database (RAP-DB): 2008 update.</title>
        <authorList>
            <consortium name="The rice annotation project (RAP)"/>
        </authorList>
    </citation>
    <scope>GENOME REANNOTATION</scope>
    <source>
        <strain>cv. Nipponbare</strain>
    </source>
</reference>
<reference key="5">
    <citation type="journal article" date="2013" name="Rice">
        <title>Improvement of the Oryza sativa Nipponbare reference genome using next generation sequence and optical map data.</title>
        <authorList>
            <person name="Kawahara Y."/>
            <person name="de la Bastide M."/>
            <person name="Hamilton J.P."/>
            <person name="Kanamori H."/>
            <person name="McCombie W.R."/>
            <person name="Ouyang S."/>
            <person name="Schwartz D.C."/>
            <person name="Tanaka T."/>
            <person name="Wu J."/>
            <person name="Zhou S."/>
            <person name="Childs K.L."/>
            <person name="Davidson R.M."/>
            <person name="Lin H."/>
            <person name="Quesada-Ocampo L."/>
            <person name="Vaillancourt B."/>
            <person name="Sakai H."/>
            <person name="Lee S.S."/>
            <person name="Kim J."/>
            <person name="Numa H."/>
            <person name="Itoh T."/>
            <person name="Buell C.R."/>
            <person name="Matsumoto T."/>
        </authorList>
    </citation>
    <scope>GENOME REANNOTATION</scope>
    <source>
        <strain>cv. Nipponbare</strain>
    </source>
</reference>
<proteinExistence type="evidence at transcript level"/>
<keyword id="KW-0175">Coiled coil</keyword>
<keyword id="KW-0238">DNA-binding</keyword>
<keyword id="KW-0539">Nucleus</keyword>
<keyword id="KW-1185">Reference proteome</keyword>
<keyword id="KW-0677">Repeat</keyword>
<keyword id="KW-0804">Transcription</keyword>
<keyword id="KW-0805">Transcription regulation</keyword>
<accession>Q94IB1</accession>
<accession>Q948M5</accession>
<organism>
    <name type="scientific">Oryza sativa subsp. japonica</name>
    <name type="common">Rice</name>
    <dbReference type="NCBI Taxonomy" id="39947"/>
    <lineage>
        <taxon>Eukaryota</taxon>
        <taxon>Viridiplantae</taxon>
        <taxon>Streptophyta</taxon>
        <taxon>Embryophyta</taxon>
        <taxon>Tracheophyta</taxon>
        <taxon>Spermatophyta</taxon>
        <taxon>Magnoliopsida</taxon>
        <taxon>Liliopsida</taxon>
        <taxon>Poales</taxon>
        <taxon>Poaceae</taxon>
        <taxon>BOP clade</taxon>
        <taxon>Oryzoideae</taxon>
        <taxon>Oryzeae</taxon>
        <taxon>Oryzinae</taxon>
        <taxon>Oryza</taxon>
        <taxon>Oryza sativa</taxon>
    </lineage>
</organism>
<name>RS2_ORYSJ</name>
<protein>
    <recommendedName>
        <fullName>Protein rough sheath 2 homolog</fullName>
    </recommendedName>
    <alternativeName>
        <fullName>OsPHAN</fullName>
    </alternativeName>
    <alternativeName>
        <fullName>OsRS2</fullName>
    </alternativeName>
    <alternativeName>
        <fullName>Protein PHANTASTICA homolog</fullName>
    </alternativeName>
</protein>
<gene>
    <name type="primary">RS2</name>
    <name type="ordered locus">Os12g0572000</name>
    <name type="ordered locus">LOC_Os12g38400</name>
</gene>
<dbReference type="EMBL" id="AB064519">
    <property type="protein sequence ID" value="BAB61618.1"/>
    <property type="molecule type" value="mRNA"/>
</dbReference>
<dbReference type="EMBL" id="AB071600">
    <property type="protein sequence ID" value="BAB68270.1"/>
    <property type="status" value="ALT_INIT"/>
    <property type="molecule type" value="Genomic_DNA"/>
</dbReference>
<dbReference type="EMBL" id="DP000011">
    <property type="protein sequence ID" value="ABA99670.1"/>
    <property type="molecule type" value="Genomic_DNA"/>
</dbReference>
<dbReference type="EMBL" id="AP008218">
    <property type="protein sequence ID" value="BAF30108.1"/>
    <property type="molecule type" value="Genomic_DNA"/>
</dbReference>
<dbReference type="EMBL" id="AP014968">
    <property type="status" value="NOT_ANNOTATED_CDS"/>
    <property type="molecule type" value="Genomic_DNA"/>
</dbReference>
<dbReference type="RefSeq" id="XP_015620377.1">
    <property type="nucleotide sequence ID" value="XM_015764891.1"/>
</dbReference>
<dbReference type="RefSeq" id="XP_015620378.1">
    <property type="nucleotide sequence ID" value="XM_015764892.1"/>
</dbReference>
<dbReference type="SMR" id="Q94IB1"/>
<dbReference type="FunCoup" id="Q94IB1">
    <property type="interactions" value="1264"/>
</dbReference>
<dbReference type="STRING" id="39947.Q94IB1"/>
<dbReference type="PaxDb" id="39947-Q94IB1"/>
<dbReference type="EnsemblPlants" id="Os12t0572000-01">
    <property type="protein sequence ID" value="Os12t0572000-01"/>
    <property type="gene ID" value="Os12g0572000"/>
</dbReference>
<dbReference type="Gramene" id="Os12t0572000-01">
    <property type="protein sequence ID" value="Os12t0572000-01"/>
    <property type="gene ID" value="Os12g0572000"/>
</dbReference>
<dbReference type="KEGG" id="dosa:Os12g0572000"/>
<dbReference type="eggNOG" id="KOG0048">
    <property type="taxonomic scope" value="Eukaryota"/>
</dbReference>
<dbReference type="InParanoid" id="Q94IB1"/>
<dbReference type="OrthoDB" id="2143914at2759"/>
<dbReference type="Proteomes" id="UP000000763">
    <property type="component" value="Chromosome 12"/>
</dbReference>
<dbReference type="Proteomes" id="UP000059680">
    <property type="component" value="Chromosome 12"/>
</dbReference>
<dbReference type="ExpressionAtlas" id="Q94IB1">
    <property type="expression patterns" value="baseline and differential"/>
</dbReference>
<dbReference type="GO" id="GO:0000793">
    <property type="term" value="C:condensed chromosome"/>
    <property type="evidence" value="ECO:0007669"/>
    <property type="project" value="EnsemblPlants"/>
</dbReference>
<dbReference type="GO" id="GO:0005730">
    <property type="term" value="C:nucleolus"/>
    <property type="evidence" value="ECO:0007669"/>
    <property type="project" value="EnsemblPlants"/>
</dbReference>
<dbReference type="GO" id="GO:0042803">
    <property type="term" value="F:protein homodimerization activity"/>
    <property type="evidence" value="ECO:0007669"/>
    <property type="project" value="EnsemblPlants"/>
</dbReference>
<dbReference type="GO" id="GO:0000976">
    <property type="term" value="F:transcription cis-regulatory region binding"/>
    <property type="evidence" value="ECO:0007669"/>
    <property type="project" value="EnsemblPlants"/>
</dbReference>
<dbReference type="GO" id="GO:0008356">
    <property type="term" value="P:asymmetric cell division"/>
    <property type="evidence" value="ECO:0007669"/>
    <property type="project" value="EnsemblPlants"/>
</dbReference>
<dbReference type="GO" id="GO:0042742">
    <property type="term" value="P:defense response to bacterium"/>
    <property type="evidence" value="ECO:0007669"/>
    <property type="project" value="EnsemblPlants"/>
</dbReference>
<dbReference type="GO" id="GO:0050832">
    <property type="term" value="P:defense response to fungus"/>
    <property type="evidence" value="ECO:0007669"/>
    <property type="project" value="EnsemblPlants"/>
</dbReference>
<dbReference type="GO" id="GO:0010338">
    <property type="term" value="P:leaf formation"/>
    <property type="evidence" value="ECO:0007669"/>
    <property type="project" value="EnsemblPlants"/>
</dbReference>
<dbReference type="GO" id="GO:0045892">
    <property type="term" value="P:negative regulation of DNA-templated transcription"/>
    <property type="evidence" value="ECO:0007669"/>
    <property type="project" value="EnsemblPlants"/>
</dbReference>
<dbReference type="GO" id="GO:0009944">
    <property type="term" value="P:polarity specification of adaxial/abaxial axis"/>
    <property type="evidence" value="ECO:0007669"/>
    <property type="project" value="EnsemblPlants"/>
</dbReference>
<dbReference type="GO" id="GO:0009946">
    <property type="term" value="P:proximal/distal axis specification"/>
    <property type="evidence" value="ECO:0007669"/>
    <property type="project" value="EnsemblPlants"/>
</dbReference>
<dbReference type="GO" id="GO:0045088">
    <property type="term" value="P:regulation of innate immune response"/>
    <property type="evidence" value="ECO:0007669"/>
    <property type="project" value="EnsemblPlants"/>
</dbReference>
<dbReference type="GO" id="GO:0009615">
    <property type="term" value="P:response to virus"/>
    <property type="evidence" value="ECO:0007669"/>
    <property type="project" value="EnsemblPlants"/>
</dbReference>
<dbReference type="CDD" id="cd00167">
    <property type="entry name" value="SANT"/>
    <property type="match status" value="2"/>
</dbReference>
<dbReference type="FunFam" id="1.10.10.60:FF:000449">
    <property type="entry name" value="MYB-related transcription factor"/>
    <property type="match status" value="1"/>
</dbReference>
<dbReference type="Gene3D" id="1.10.10.60">
    <property type="entry name" value="Homeodomain-like"/>
    <property type="match status" value="2"/>
</dbReference>
<dbReference type="InterPro" id="IPR009057">
    <property type="entry name" value="Homeodomain-like_sf"/>
</dbReference>
<dbReference type="InterPro" id="IPR052844">
    <property type="entry name" value="Leaf_Dev_Regulator"/>
</dbReference>
<dbReference type="InterPro" id="IPR017930">
    <property type="entry name" value="Myb_dom"/>
</dbReference>
<dbReference type="InterPro" id="IPR001005">
    <property type="entry name" value="SANT/Myb"/>
</dbReference>
<dbReference type="PANTHER" id="PTHR47214">
    <property type="entry name" value="PROTEIN ROUGH SHEATH 2 HOMOLOG"/>
    <property type="match status" value="1"/>
</dbReference>
<dbReference type="PANTHER" id="PTHR47214:SF3">
    <property type="entry name" value="TRANSCRIPTION FACTOR AS1"/>
    <property type="match status" value="1"/>
</dbReference>
<dbReference type="Pfam" id="PF00249">
    <property type="entry name" value="Myb_DNA-binding"/>
    <property type="match status" value="2"/>
</dbReference>
<dbReference type="SMART" id="SM00717">
    <property type="entry name" value="SANT"/>
    <property type="match status" value="2"/>
</dbReference>
<dbReference type="SUPFAM" id="SSF46689">
    <property type="entry name" value="Homeodomain-like"/>
    <property type="match status" value="1"/>
</dbReference>
<dbReference type="PROSITE" id="PS51294">
    <property type="entry name" value="HTH_MYB"/>
    <property type="match status" value="2"/>
</dbReference>
<evidence type="ECO:0000250" key="1"/>
<evidence type="ECO:0000255" key="2"/>
<evidence type="ECO:0000255" key="3">
    <source>
        <dbReference type="PROSITE-ProRule" id="PRU00625"/>
    </source>
</evidence>
<evidence type="ECO:0000305" key="4"/>